<name>BST1B_YARLI</name>
<evidence type="ECO:0000250" key="1"/>
<evidence type="ECO:0000255" key="2"/>
<evidence type="ECO:0000305" key="3"/>
<accession>Q6BZU7</accession>
<proteinExistence type="inferred from homology"/>
<feature type="chain" id="PRO_0000277645" description="GPI inositol-deacylase B">
    <location>
        <begin position="1"/>
        <end position="955"/>
    </location>
</feature>
<feature type="transmembrane region" description="Helical" evidence="2">
    <location>
        <begin position="8"/>
        <end position="28"/>
    </location>
</feature>
<feature type="transmembrane region" description="Helical" evidence="2">
    <location>
        <begin position="489"/>
        <end position="509"/>
    </location>
</feature>
<feature type="transmembrane region" description="Helical" evidence="2">
    <location>
        <begin position="600"/>
        <end position="620"/>
    </location>
</feature>
<feature type="transmembrane region" description="Helical" evidence="2">
    <location>
        <begin position="643"/>
        <end position="663"/>
    </location>
</feature>
<feature type="transmembrane region" description="Helical" evidence="2">
    <location>
        <begin position="703"/>
        <end position="723"/>
    </location>
</feature>
<feature type="transmembrane region" description="Helical" evidence="2">
    <location>
        <begin position="772"/>
        <end position="792"/>
    </location>
</feature>
<feature type="transmembrane region" description="Helical" evidence="2">
    <location>
        <begin position="840"/>
        <end position="860"/>
    </location>
</feature>
<feature type="transmembrane region" description="Helical" evidence="2">
    <location>
        <begin position="870"/>
        <end position="890"/>
    </location>
</feature>
<feature type="transmembrane region" description="Helical" evidence="2">
    <location>
        <begin position="919"/>
        <end position="939"/>
    </location>
</feature>
<feature type="active site" evidence="1">
    <location>
        <position position="180"/>
    </location>
</feature>
<feature type="glycosylation site" description="N-linked (GlcNAc...) asparagine" evidence="2">
    <location>
        <position position="7"/>
    </location>
</feature>
<feature type="glycosylation site" description="N-linked (GlcNAc...) asparagine" evidence="2">
    <location>
        <position position="431"/>
    </location>
</feature>
<feature type="glycosylation site" description="N-linked (GlcNAc...) asparagine" evidence="2">
    <location>
        <position position="753"/>
    </location>
</feature>
<feature type="glycosylation site" description="N-linked (GlcNAc...) asparagine" evidence="2">
    <location>
        <position position="914"/>
    </location>
</feature>
<feature type="glycosylation site" description="N-linked (GlcNAc...) asparagine" evidence="2">
    <location>
        <position position="945"/>
    </location>
</feature>
<sequence length="955" mass="106313">MRRININASVALWTVFTILTIWISFALHQPDVQTCDIARTWISTAHVEGFDSKHSRFGEKYSLHLIRASQHAIPQPIRPSGVPVIFVHGNAGGFRQIGPFAGIAQELNDELRLLTKGDAGTEFDFFSIDFNEAYSALHGRTLLDQAEYLNDAIAYILDMYKRNQQEGLQVPESVIVLGHSMGGIVSRVAVTLENYRPQSVNTIITLASPHLIPAATFDADITKVYHLVNDYWRAAFAEGDTNDNPLRDITILSIAGGKSDTMVPSDYVSLDSLVPATNGLSTFTNSIARVWTGIDHDAVMWCHQLRRQIASALFHIVDPNVPSQTKPREVRMSTFHRSFSGSQSLSSAMQDFINIEATPLQDGVEQRLAPGFYWGRNLQMLTNHVINYDSNIDLYERKSGSLLKVWQCRSRQGSSFRQCKRIYPLFVPGINDSVLSHVSVNGILLLDVSKEASESGDWINIDETSMSAAPFNIYGNIVFSTSNMVSQDIAFPALTSGLISYKVLTSGGVGLIRQYMGRNHPSRTYDSKYLIPHYARVDISFHGDGAPFVPFKLKTPTKTDLSTKSYKAPLHLQVFGQGKVTISVDYVGSLGNLFMRYRTLLFSLPTAVLYAVLLLQFWRYYQSGSDAKFLSLRDATGLFIKQYLSWACLVVAGLSFVIKFEFIRDFLHFIQIPATGSSKSYEIETFYGSLYTHIDLFLGISGPIGVVLAPAFLALATGIVVVVTEIVIAVTTLASLAISRGHRKMSLLQTPKNVTIQSSDDPIGDLLHKRTVIIALMALLVLLFVPYQLAFALATASLLALTAYFDAEESASASHDLSTSLYANRQAQEKVGSFINYATTMSVVMVWTTLVNIPVLAVWVQGMVFGRSTIFSSHHNLLSVLPTLLFIENLSFRRMPERGLPFVTYIILGYACFNCTAYGMMHAFMIHHWFNLLAGWLLITSYKRNKTVIKESRIE</sequence>
<protein>
    <recommendedName>
        <fullName>GPI inositol-deacylase B</fullName>
        <ecNumber>3.1.-.-</ecNumber>
    </recommendedName>
</protein>
<keyword id="KW-0256">Endoplasmic reticulum</keyword>
<keyword id="KW-0325">Glycoprotein</keyword>
<keyword id="KW-0378">Hydrolase</keyword>
<keyword id="KW-0472">Membrane</keyword>
<keyword id="KW-0653">Protein transport</keyword>
<keyword id="KW-1185">Reference proteome</keyword>
<keyword id="KW-0812">Transmembrane</keyword>
<keyword id="KW-1133">Transmembrane helix</keyword>
<keyword id="KW-0813">Transport</keyword>
<gene>
    <name type="primary">BST1B</name>
    <name type="ordered locus">YALI0F30767g</name>
</gene>
<reference key="1">
    <citation type="journal article" date="2004" name="Nature">
        <title>Genome evolution in yeasts.</title>
        <authorList>
            <person name="Dujon B."/>
            <person name="Sherman D."/>
            <person name="Fischer G."/>
            <person name="Durrens P."/>
            <person name="Casaregola S."/>
            <person name="Lafontaine I."/>
            <person name="de Montigny J."/>
            <person name="Marck C."/>
            <person name="Neuveglise C."/>
            <person name="Talla E."/>
            <person name="Goffard N."/>
            <person name="Frangeul L."/>
            <person name="Aigle M."/>
            <person name="Anthouard V."/>
            <person name="Babour A."/>
            <person name="Barbe V."/>
            <person name="Barnay S."/>
            <person name="Blanchin S."/>
            <person name="Beckerich J.-M."/>
            <person name="Beyne E."/>
            <person name="Bleykasten C."/>
            <person name="Boisrame A."/>
            <person name="Boyer J."/>
            <person name="Cattolico L."/>
            <person name="Confanioleri F."/>
            <person name="de Daruvar A."/>
            <person name="Despons L."/>
            <person name="Fabre E."/>
            <person name="Fairhead C."/>
            <person name="Ferry-Dumazet H."/>
            <person name="Groppi A."/>
            <person name="Hantraye F."/>
            <person name="Hennequin C."/>
            <person name="Jauniaux N."/>
            <person name="Joyet P."/>
            <person name="Kachouri R."/>
            <person name="Kerrest A."/>
            <person name="Koszul R."/>
            <person name="Lemaire M."/>
            <person name="Lesur I."/>
            <person name="Ma L."/>
            <person name="Muller H."/>
            <person name="Nicaud J.-M."/>
            <person name="Nikolski M."/>
            <person name="Oztas S."/>
            <person name="Ozier-Kalogeropoulos O."/>
            <person name="Pellenz S."/>
            <person name="Potier S."/>
            <person name="Richard G.-F."/>
            <person name="Straub M.-L."/>
            <person name="Suleau A."/>
            <person name="Swennen D."/>
            <person name="Tekaia F."/>
            <person name="Wesolowski-Louvel M."/>
            <person name="Westhof E."/>
            <person name="Wirth B."/>
            <person name="Zeniou-Meyer M."/>
            <person name="Zivanovic Y."/>
            <person name="Bolotin-Fukuhara M."/>
            <person name="Thierry A."/>
            <person name="Bouchier C."/>
            <person name="Caudron B."/>
            <person name="Scarpelli C."/>
            <person name="Gaillardin C."/>
            <person name="Weissenbach J."/>
            <person name="Wincker P."/>
            <person name="Souciet J.-L."/>
        </authorList>
    </citation>
    <scope>NUCLEOTIDE SEQUENCE [LARGE SCALE GENOMIC DNA]</scope>
    <source>
        <strain>CLIB 122 / E 150</strain>
    </source>
</reference>
<comment type="function">
    <text evidence="1">Involved in inositol deacylation of GPI-anchored proteins which plays important roles in the quality control and ER-associated degradation of GPI-anchored proteins.</text>
</comment>
<comment type="subcellular location">
    <subcellularLocation>
        <location evidence="1">Endoplasmic reticulum membrane</location>
        <topology evidence="1">Multi-pass membrane protein</topology>
    </subcellularLocation>
</comment>
<comment type="similarity">
    <text evidence="3">Belongs to the GPI inositol-deacylase family.</text>
</comment>
<organism>
    <name type="scientific">Yarrowia lipolytica (strain CLIB 122 / E 150)</name>
    <name type="common">Yeast</name>
    <name type="synonym">Candida lipolytica</name>
    <dbReference type="NCBI Taxonomy" id="284591"/>
    <lineage>
        <taxon>Eukaryota</taxon>
        <taxon>Fungi</taxon>
        <taxon>Dikarya</taxon>
        <taxon>Ascomycota</taxon>
        <taxon>Saccharomycotina</taxon>
        <taxon>Dipodascomycetes</taxon>
        <taxon>Dipodascales</taxon>
        <taxon>Dipodascales incertae sedis</taxon>
        <taxon>Yarrowia</taxon>
    </lineage>
</organism>
<dbReference type="EC" id="3.1.-.-"/>
<dbReference type="EMBL" id="CR382132">
    <property type="protein sequence ID" value="CAG78878.1"/>
    <property type="molecule type" value="Genomic_DNA"/>
</dbReference>
<dbReference type="RefSeq" id="XP_506065.1">
    <property type="nucleotide sequence ID" value="XM_506065.1"/>
</dbReference>
<dbReference type="SMR" id="Q6BZU7"/>
<dbReference type="FunCoup" id="Q6BZU7">
    <property type="interactions" value="51"/>
</dbReference>
<dbReference type="STRING" id="284591.Q6BZU7"/>
<dbReference type="ESTHER" id="yarli-BST1B">
    <property type="family name" value="PGAP1"/>
</dbReference>
<dbReference type="GlyCosmos" id="Q6BZU7">
    <property type="glycosylation" value="5 sites, No reported glycans"/>
</dbReference>
<dbReference type="EnsemblFungi" id="CAG78878">
    <property type="protein sequence ID" value="CAG78878"/>
    <property type="gene ID" value="YALI0_F30767g"/>
</dbReference>
<dbReference type="KEGG" id="yli:2907924"/>
<dbReference type="VEuPathDB" id="FungiDB:YALI0_F30767g"/>
<dbReference type="HOGENOM" id="CLU_006103_0_0_1"/>
<dbReference type="InParanoid" id="Q6BZU7"/>
<dbReference type="OrthoDB" id="126152at4891"/>
<dbReference type="Proteomes" id="UP000001300">
    <property type="component" value="Chromosome F"/>
</dbReference>
<dbReference type="GO" id="GO:0005783">
    <property type="term" value="C:endoplasmic reticulum"/>
    <property type="evidence" value="ECO:0000318"/>
    <property type="project" value="GO_Central"/>
</dbReference>
<dbReference type="GO" id="GO:0005789">
    <property type="term" value="C:endoplasmic reticulum membrane"/>
    <property type="evidence" value="ECO:0007669"/>
    <property type="project" value="UniProtKB-SubCell"/>
</dbReference>
<dbReference type="GO" id="GO:0050185">
    <property type="term" value="F:phosphatidylinositol deacylase activity"/>
    <property type="evidence" value="ECO:0000318"/>
    <property type="project" value="GO_Central"/>
</dbReference>
<dbReference type="GO" id="GO:0006506">
    <property type="term" value="P:GPI anchor biosynthetic process"/>
    <property type="evidence" value="ECO:0000318"/>
    <property type="project" value="GO_Central"/>
</dbReference>
<dbReference type="GO" id="GO:0015031">
    <property type="term" value="P:protein transport"/>
    <property type="evidence" value="ECO:0007669"/>
    <property type="project" value="UniProtKB-KW"/>
</dbReference>
<dbReference type="FunFam" id="3.40.50.1820:FF:000056">
    <property type="entry name" value="GPI inositol-deacylase"/>
    <property type="match status" value="1"/>
</dbReference>
<dbReference type="Gene3D" id="3.40.50.1820">
    <property type="entry name" value="alpha/beta hydrolase"/>
    <property type="match status" value="1"/>
</dbReference>
<dbReference type="InterPro" id="IPR029058">
    <property type="entry name" value="AB_hydrolase_fold"/>
</dbReference>
<dbReference type="InterPro" id="IPR012908">
    <property type="entry name" value="PGAP1-ab_dom-like"/>
</dbReference>
<dbReference type="InterPro" id="IPR039529">
    <property type="entry name" value="PGAP1/BST1"/>
</dbReference>
<dbReference type="InterPro" id="IPR056824">
    <property type="entry name" value="PGAP1_TMD"/>
</dbReference>
<dbReference type="PANTHER" id="PTHR15495:SF7">
    <property type="entry name" value="GPI INOSITOL-DEACYLASE"/>
    <property type="match status" value="1"/>
</dbReference>
<dbReference type="PANTHER" id="PTHR15495">
    <property type="entry name" value="NEGATIVE REGULATOR OF VESICLE FORMATION-RELATED"/>
    <property type="match status" value="1"/>
</dbReference>
<dbReference type="Pfam" id="PF07819">
    <property type="entry name" value="PGAP1"/>
    <property type="match status" value="1"/>
</dbReference>
<dbReference type="Pfam" id="PF25140">
    <property type="entry name" value="PGAP1_TMD"/>
    <property type="match status" value="1"/>
</dbReference>
<dbReference type="SUPFAM" id="SSF53474">
    <property type="entry name" value="alpha/beta-Hydrolases"/>
    <property type="match status" value="1"/>
</dbReference>
<dbReference type="PROSITE" id="PS00120">
    <property type="entry name" value="LIPASE_SER"/>
    <property type="match status" value="1"/>
</dbReference>